<gene>
    <name type="primary">Blcap</name>
</gene>
<reference key="1">
    <citation type="submission" date="2001-09" db="EMBL/GenBank/DDBJ databases">
        <authorList>
            <person name="Hahn Y."/>
        </authorList>
    </citation>
    <scope>NUCLEOTIDE SEQUENCE [MRNA]</scope>
</reference>
<reference key="2">
    <citation type="journal article" date="2004" name="Genome Res.">
        <title>The status, quality, and expansion of the NIH full-length cDNA project: the Mammalian Gene Collection (MGC).</title>
        <authorList>
            <consortium name="The MGC Project Team"/>
        </authorList>
    </citation>
    <scope>NUCLEOTIDE SEQUENCE [LARGE SCALE MRNA]</scope>
    <source>
        <tissue>Brain</tissue>
    </source>
</reference>
<proteinExistence type="inferred from homology"/>
<accession>P62950</accession>
<accession>O60629</accession>
<accession>Q9D3B5</accession>
<protein>
    <recommendedName>
        <fullName evidence="3">Apoptosis inducing factor BLCAP</fullName>
    </recommendedName>
    <alternativeName>
        <fullName>Bladder cancer 10 kDa protein</fullName>
        <shortName>Bc10</shortName>
    </alternativeName>
    <alternativeName>
        <fullName>Bladder cancer-associated protein</fullName>
    </alternativeName>
</protein>
<dbReference type="EMBL" id="AB071598">
    <property type="protein sequence ID" value="BAB68312.1"/>
    <property type="molecule type" value="mRNA"/>
</dbReference>
<dbReference type="EMBL" id="BC087661">
    <property type="protein sequence ID" value="AAH87661.1"/>
    <property type="molecule type" value="mRNA"/>
</dbReference>
<dbReference type="RefSeq" id="NP_598266.1">
    <property type="nucleotide sequence ID" value="NM_133582.3"/>
</dbReference>
<dbReference type="RefSeq" id="XP_063139111.1">
    <property type="nucleotide sequence ID" value="XM_063283041.1"/>
</dbReference>
<dbReference type="FunCoup" id="P62950">
    <property type="interactions" value="1847"/>
</dbReference>
<dbReference type="STRING" id="10116.ENSRNOP00000031525"/>
<dbReference type="PaxDb" id="10116-ENSRNOP00000031525"/>
<dbReference type="Ensembl" id="ENSRNOT00000033525.6">
    <property type="protein sequence ID" value="ENSRNOP00000031525.3"/>
    <property type="gene ID" value="ENSRNOG00000024437.6"/>
</dbReference>
<dbReference type="GeneID" id="171113"/>
<dbReference type="KEGG" id="rno:171113"/>
<dbReference type="UCSC" id="RGD:621666">
    <property type="organism name" value="rat"/>
</dbReference>
<dbReference type="AGR" id="RGD:621666"/>
<dbReference type="CTD" id="10904"/>
<dbReference type="RGD" id="621666">
    <property type="gene designation" value="Blcap"/>
</dbReference>
<dbReference type="eggNOG" id="KOG4489">
    <property type="taxonomic scope" value="Eukaryota"/>
</dbReference>
<dbReference type="GeneTree" id="ENSGT00390000014105"/>
<dbReference type="HOGENOM" id="CLU_181908_0_0_1"/>
<dbReference type="InParanoid" id="P62950"/>
<dbReference type="OMA" id="FLLCYSC"/>
<dbReference type="OrthoDB" id="5772623at2759"/>
<dbReference type="PhylomeDB" id="P62950"/>
<dbReference type="TreeFam" id="TF313306"/>
<dbReference type="PRO" id="PR:P62950"/>
<dbReference type="Proteomes" id="UP000002494">
    <property type="component" value="Chromosome 3"/>
</dbReference>
<dbReference type="Bgee" id="ENSRNOG00000024437">
    <property type="expression patterns" value="Expressed in frontal cortex and 20 other cell types or tissues"/>
</dbReference>
<dbReference type="GO" id="GO:0005737">
    <property type="term" value="C:cytoplasm"/>
    <property type="evidence" value="ECO:0007669"/>
    <property type="project" value="UniProtKB-SubCell"/>
</dbReference>
<dbReference type="GO" id="GO:0016020">
    <property type="term" value="C:membrane"/>
    <property type="evidence" value="ECO:0007669"/>
    <property type="project" value="UniProtKB-SubCell"/>
</dbReference>
<dbReference type="GO" id="GO:0005634">
    <property type="term" value="C:nucleus"/>
    <property type="evidence" value="ECO:0007669"/>
    <property type="project" value="UniProtKB-SubCell"/>
</dbReference>
<dbReference type="GO" id="GO:0030262">
    <property type="term" value="P:apoptotic nuclear changes"/>
    <property type="evidence" value="ECO:0000266"/>
    <property type="project" value="RGD"/>
</dbReference>
<dbReference type="InterPro" id="IPR009598">
    <property type="entry name" value="BCALP"/>
</dbReference>
<dbReference type="PANTHER" id="PTHR13259">
    <property type="entry name" value="BLADDER CANCER 10 KD PROTEIN HOMOLOG"/>
    <property type="match status" value="1"/>
</dbReference>
<dbReference type="PANTHER" id="PTHR13259:SF1">
    <property type="entry name" value="BLADDER CANCER-ASSOCIATED PROTEIN"/>
    <property type="match status" value="1"/>
</dbReference>
<dbReference type="Pfam" id="PF06726">
    <property type="entry name" value="BC10"/>
    <property type="match status" value="1"/>
</dbReference>
<dbReference type="SMART" id="SM01396">
    <property type="entry name" value="BC10"/>
    <property type="match status" value="1"/>
</dbReference>
<keyword id="KW-0053">Apoptosis</keyword>
<keyword id="KW-0131">Cell cycle</keyword>
<keyword id="KW-0963">Cytoplasm</keyword>
<keyword id="KW-0472">Membrane</keyword>
<keyword id="KW-0539">Nucleus</keyword>
<keyword id="KW-1185">Reference proteome</keyword>
<keyword id="KW-0812">Transmembrane</keyword>
<keyword id="KW-1133">Transmembrane helix</keyword>
<keyword id="KW-0043">Tumor suppressor</keyword>
<comment type="function">
    <text evidence="1">Acts as a tumor suppressor; induces growth arrest at G(1)/S checkpoint and apoptosis via RB1-dependent and p53/TP53- and NF-kappa-B-independent mechanisms. Modulates expression of genes involved in the regulation of proliferation, cell cycle and apoptosis.</text>
</comment>
<comment type="subunit">
    <text evidence="1">Interacts with RB1 (phosphorylated and unphosphorylated) (By similarity). Interacts with STAT3; the interaction is promoted by cell stimulation with IL6 and phosphorylation of STAT3 (By similarity).</text>
</comment>
<comment type="subcellular location">
    <subcellularLocation>
        <location evidence="1">Cytoplasm</location>
    </subcellularLocation>
    <subcellularLocation>
        <location evidence="1">Nucleus</location>
    </subcellularLocation>
    <subcellularLocation>
        <location evidence="2">Membrane</location>
        <topology evidence="2">Multi-pass membrane protein</topology>
    </subcellularLocation>
</comment>
<comment type="similarity">
    <text evidence="3">Belongs to the BLCAP family.</text>
</comment>
<evidence type="ECO:0000250" key="1">
    <source>
        <dbReference type="UniProtKB" id="P62952"/>
    </source>
</evidence>
<evidence type="ECO:0000255" key="2"/>
<evidence type="ECO:0000305" key="3"/>
<feature type="chain" id="PRO_0000064853" description="Apoptosis inducing factor BLCAP">
    <location>
        <begin position="1"/>
        <end position="87"/>
    </location>
</feature>
<feature type="transmembrane region" description="Helical" evidence="2">
    <location>
        <begin position="19"/>
        <end position="39"/>
    </location>
</feature>
<feature type="transmembrane region" description="Helical" evidence="2">
    <location>
        <begin position="43"/>
        <end position="63"/>
    </location>
</feature>
<organism>
    <name type="scientific">Rattus norvegicus</name>
    <name type="common">Rat</name>
    <dbReference type="NCBI Taxonomy" id="10116"/>
    <lineage>
        <taxon>Eukaryota</taxon>
        <taxon>Metazoa</taxon>
        <taxon>Chordata</taxon>
        <taxon>Craniata</taxon>
        <taxon>Vertebrata</taxon>
        <taxon>Euteleostomi</taxon>
        <taxon>Mammalia</taxon>
        <taxon>Eutheria</taxon>
        <taxon>Euarchontoglires</taxon>
        <taxon>Glires</taxon>
        <taxon>Rodentia</taxon>
        <taxon>Myomorpha</taxon>
        <taxon>Muroidea</taxon>
        <taxon>Muridae</taxon>
        <taxon>Murinae</taxon>
        <taxon>Rattus</taxon>
    </lineage>
</organism>
<sequence>MYCLQWLLPVLLIPKPLNPALWFSHSMFMGFYLLSFLLERKPCTICALVFLAALFLICYSCWGNCFLYHCSDSPLPESAHDPGVVGT</sequence>
<name>BLCAP_RAT</name>